<name>RL6_SYNC1</name>
<gene>
    <name evidence="1" type="primary">rplF</name>
    <name type="ordered locus">Pcar_0716</name>
</gene>
<organism>
    <name type="scientific">Syntrophotalea carbinolica (strain DSM 2380 / NBRC 103641 / GraBd1)</name>
    <name type="common">Pelobacter carbinolicus</name>
    <dbReference type="NCBI Taxonomy" id="338963"/>
    <lineage>
        <taxon>Bacteria</taxon>
        <taxon>Pseudomonadati</taxon>
        <taxon>Thermodesulfobacteriota</taxon>
        <taxon>Desulfuromonadia</taxon>
        <taxon>Desulfuromonadales</taxon>
        <taxon>Syntrophotaleaceae</taxon>
        <taxon>Syntrophotalea</taxon>
    </lineage>
</organism>
<protein>
    <recommendedName>
        <fullName evidence="1">Large ribosomal subunit protein uL6</fullName>
    </recommendedName>
    <alternativeName>
        <fullName evidence="2">50S ribosomal protein L6</fullName>
    </alternativeName>
</protein>
<comment type="function">
    <text evidence="1">This protein binds to the 23S rRNA, and is important in its secondary structure. It is located near the subunit interface in the base of the L7/L12 stalk, and near the tRNA binding site of the peptidyltransferase center.</text>
</comment>
<comment type="subunit">
    <text evidence="1">Part of the 50S ribosomal subunit.</text>
</comment>
<comment type="similarity">
    <text evidence="1">Belongs to the universal ribosomal protein uL6 family.</text>
</comment>
<dbReference type="EMBL" id="CP000142">
    <property type="protein sequence ID" value="ABA87975.1"/>
    <property type="molecule type" value="Genomic_DNA"/>
</dbReference>
<dbReference type="RefSeq" id="WP_011340418.1">
    <property type="nucleotide sequence ID" value="NC_007498.2"/>
</dbReference>
<dbReference type="SMR" id="Q3A6N2"/>
<dbReference type="STRING" id="338963.Pcar_0716"/>
<dbReference type="KEGG" id="pca:Pcar_0716"/>
<dbReference type="eggNOG" id="COG0097">
    <property type="taxonomic scope" value="Bacteria"/>
</dbReference>
<dbReference type="HOGENOM" id="CLU_065464_1_2_7"/>
<dbReference type="OrthoDB" id="9805007at2"/>
<dbReference type="Proteomes" id="UP000002534">
    <property type="component" value="Chromosome"/>
</dbReference>
<dbReference type="GO" id="GO:0022625">
    <property type="term" value="C:cytosolic large ribosomal subunit"/>
    <property type="evidence" value="ECO:0007669"/>
    <property type="project" value="TreeGrafter"/>
</dbReference>
<dbReference type="GO" id="GO:0019843">
    <property type="term" value="F:rRNA binding"/>
    <property type="evidence" value="ECO:0007669"/>
    <property type="project" value="UniProtKB-UniRule"/>
</dbReference>
<dbReference type="GO" id="GO:0003735">
    <property type="term" value="F:structural constituent of ribosome"/>
    <property type="evidence" value="ECO:0007669"/>
    <property type="project" value="InterPro"/>
</dbReference>
<dbReference type="GO" id="GO:0002181">
    <property type="term" value="P:cytoplasmic translation"/>
    <property type="evidence" value="ECO:0007669"/>
    <property type="project" value="TreeGrafter"/>
</dbReference>
<dbReference type="FunFam" id="3.90.930.12:FF:000001">
    <property type="entry name" value="50S ribosomal protein L6"/>
    <property type="match status" value="1"/>
</dbReference>
<dbReference type="FunFam" id="3.90.930.12:FF:000002">
    <property type="entry name" value="50S ribosomal protein L6"/>
    <property type="match status" value="1"/>
</dbReference>
<dbReference type="Gene3D" id="3.90.930.12">
    <property type="entry name" value="Ribosomal protein L6, alpha-beta domain"/>
    <property type="match status" value="2"/>
</dbReference>
<dbReference type="HAMAP" id="MF_01365_B">
    <property type="entry name" value="Ribosomal_uL6_B"/>
    <property type="match status" value="1"/>
</dbReference>
<dbReference type="InterPro" id="IPR000702">
    <property type="entry name" value="Ribosomal_uL6-like"/>
</dbReference>
<dbReference type="InterPro" id="IPR036789">
    <property type="entry name" value="Ribosomal_uL6-like_a/b-dom_sf"/>
</dbReference>
<dbReference type="InterPro" id="IPR020040">
    <property type="entry name" value="Ribosomal_uL6_a/b-dom"/>
</dbReference>
<dbReference type="InterPro" id="IPR019906">
    <property type="entry name" value="Ribosomal_uL6_bac-type"/>
</dbReference>
<dbReference type="InterPro" id="IPR002358">
    <property type="entry name" value="Ribosomal_uL6_CS"/>
</dbReference>
<dbReference type="NCBIfam" id="TIGR03654">
    <property type="entry name" value="L6_bact"/>
    <property type="match status" value="1"/>
</dbReference>
<dbReference type="PANTHER" id="PTHR11655">
    <property type="entry name" value="60S/50S RIBOSOMAL PROTEIN L6/L9"/>
    <property type="match status" value="1"/>
</dbReference>
<dbReference type="PANTHER" id="PTHR11655:SF14">
    <property type="entry name" value="LARGE RIBOSOMAL SUBUNIT PROTEIN UL6M"/>
    <property type="match status" value="1"/>
</dbReference>
<dbReference type="Pfam" id="PF00347">
    <property type="entry name" value="Ribosomal_L6"/>
    <property type="match status" value="2"/>
</dbReference>
<dbReference type="PIRSF" id="PIRSF002162">
    <property type="entry name" value="Ribosomal_L6"/>
    <property type="match status" value="1"/>
</dbReference>
<dbReference type="PRINTS" id="PR00059">
    <property type="entry name" value="RIBOSOMALL6"/>
</dbReference>
<dbReference type="SUPFAM" id="SSF56053">
    <property type="entry name" value="Ribosomal protein L6"/>
    <property type="match status" value="2"/>
</dbReference>
<dbReference type="PROSITE" id="PS00525">
    <property type="entry name" value="RIBOSOMAL_L6_1"/>
    <property type="match status" value="1"/>
</dbReference>
<proteinExistence type="inferred from homology"/>
<sequence>MSRIGKKPIDIPKGVTVSLAGDTVTVKGPKGELTRNIVAGIRLETAGDQILVQCEKEGKQEGAYRGLVRALVANMVEGVTNGFERVLEINGVGYRAEVKGSALNLSLGYSHPIEYALPKGISAEVEKQTKIIVRGIDKELVGATAAKIRSFRKPEPYKGKGVKYAEERIVRKAGKAGKK</sequence>
<keyword id="KW-1185">Reference proteome</keyword>
<keyword id="KW-0687">Ribonucleoprotein</keyword>
<keyword id="KW-0689">Ribosomal protein</keyword>
<keyword id="KW-0694">RNA-binding</keyword>
<keyword id="KW-0699">rRNA-binding</keyword>
<evidence type="ECO:0000255" key="1">
    <source>
        <dbReference type="HAMAP-Rule" id="MF_01365"/>
    </source>
</evidence>
<evidence type="ECO:0000305" key="2"/>
<feature type="chain" id="PRO_0000260910" description="Large ribosomal subunit protein uL6">
    <location>
        <begin position="1"/>
        <end position="179"/>
    </location>
</feature>
<accession>Q3A6N2</accession>
<reference key="1">
    <citation type="submission" date="2005-10" db="EMBL/GenBank/DDBJ databases">
        <title>Complete sequence of Pelobacter carbinolicus DSM 2380.</title>
        <authorList>
            <person name="Copeland A."/>
            <person name="Lucas S."/>
            <person name="Lapidus A."/>
            <person name="Barry K."/>
            <person name="Detter J.C."/>
            <person name="Glavina T."/>
            <person name="Hammon N."/>
            <person name="Israni S."/>
            <person name="Pitluck S."/>
            <person name="Chertkov O."/>
            <person name="Schmutz J."/>
            <person name="Larimer F."/>
            <person name="Land M."/>
            <person name="Kyrpides N."/>
            <person name="Ivanova N."/>
            <person name="Richardson P."/>
        </authorList>
    </citation>
    <scope>NUCLEOTIDE SEQUENCE [LARGE SCALE GENOMIC DNA]</scope>
    <source>
        <strain>DSM 2380 / NBRC 103641 / GraBd1</strain>
    </source>
</reference>